<gene>
    <name evidence="1" type="primary">rpmG</name>
    <name type="ordered locus">APJL_2019</name>
</gene>
<dbReference type="EMBL" id="CP000687">
    <property type="protein sequence ID" value="ABY70564.1"/>
    <property type="molecule type" value="Genomic_DNA"/>
</dbReference>
<dbReference type="RefSeq" id="WP_005599764.1">
    <property type="nucleotide sequence ID" value="NC_010278.1"/>
</dbReference>
<dbReference type="SMR" id="B0BTZ7"/>
<dbReference type="GeneID" id="48600273"/>
<dbReference type="KEGG" id="apj:APJL_2019"/>
<dbReference type="HOGENOM" id="CLU_190949_1_1_6"/>
<dbReference type="Proteomes" id="UP000008547">
    <property type="component" value="Chromosome"/>
</dbReference>
<dbReference type="GO" id="GO:0022625">
    <property type="term" value="C:cytosolic large ribosomal subunit"/>
    <property type="evidence" value="ECO:0007669"/>
    <property type="project" value="TreeGrafter"/>
</dbReference>
<dbReference type="GO" id="GO:0003735">
    <property type="term" value="F:structural constituent of ribosome"/>
    <property type="evidence" value="ECO:0007669"/>
    <property type="project" value="InterPro"/>
</dbReference>
<dbReference type="GO" id="GO:0006412">
    <property type="term" value="P:translation"/>
    <property type="evidence" value="ECO:0007669"/>
    <property type="project" value="UniProtKB-UniRule"/>
</dbReference>
<dbReference type="FunFam" id="2.20.28.120:FF:000001">
    <property type="entry name" value="50S ribosomal protein L33"/>
    <property type="match status" value="1"/>
</dbReference>
<dbReference type="Gene3D" id="2.20.28.120">
    <property type="entry name" value="Ribosomal protein L33"/>
    <property type="match status" value="1"/>
</dbReference>
<dbReference type="HAMAP" id="MF_00294">
    <property type="entry name" value="Ribosomal_bL33"/>
    <property type="match status" value="1"/>
</dbReference>
<dbReference type="InterPro" id="IPR001705">
    <property type="entry name" value="Ribosomal_bL33"/>
</dbReference>
<dbReference type="InterPro" id="IPR018264">
    <property type="entry name" value="Ribosomal_bL33_CS"/>
</dbReference>
<dbReference type="InterPro" id="IPR038584">
    <property type="entry name" value="Ribosomal_bL33_sf"/>
</dbReference>
<dbReference type="InterPro" id="IPR011332">
    <property type="entry name" value="Ribosomal_zn-bd"/>
</dbReference>
<dbReference type="NCBIfam" id="NF001860">
    <property type="entry name" value="PRK00595.1"/>
    <property type="match status" value="1"/>
</dbReference>
<dbReference type="NCBIfam" id="TIGR01023">
    <property type="entry name" value="rpmG_bact"/>
    <property type="match status" value="1"/>
</dbReference>
<dbReference type="PANTHER" id="PTHR15238">
    <property type="entry name" value="54S RIBOSOMAL PROTEIN L39, MITOCHONDRIAL"/>
    <property type="match status" value="1"/>
</dbReference>
<dbReference type="PANTHER" id="PTHR15238:SF1">
    <property type="entry name" value="LARGE RIBOSOMAL SUBUNIT PROTEIN BL33M"/>
    <property type="match status" value="1"/>
</dbReference>
<dbReference type="Pfam" id="PF00471">
    <property type="entry name" value="Ribosomal_L33"/>
    <property type="match status" value="1"/>
</dbReference>
<dbReference type="SUPFAM" id="SSF57829">
    <property type="entry name" value="Zn-binding ribosomal proteins"/>
    <property type="match status" value="1"/>
</dbReference>
<dbReference type="PROSITE" id="PS00582">
    <property type="entry name" value="RIBOSOMAL_L33"/>
    <property type="match status" value="1"/>
</dbReference>
<feature type="chain" id="PRO_1000115091" description="Large ribosomal subunit protein bL33">
    <location>
        <begin position="1"/>
        <end position="56"/>
    </location>
</feature>
<comment type="similarity">
    <text evidence="1">Belongs to the bacterial ribosomal protein bL33 family.</text>
</comment>
<reference key="1">
    <citation type="journal article" date="2008" name="PLoS ONE">
        <title>Genome biology of Actinobacillus pleuropneumoniae JL03, an isolate of serotype 3 prevalent in China.</title>
        <authorList>
            <person name="Xu Z."/>
            <person name="Zhou Y."/>
            <person name="Li L."/>
            <person name="Zhou R."/>
            <person name="Xiao S."/>
            <person name="Wan Y."/>
            <person name="Zhang S."/>
            <person name="Wang K."/>
            <person name="Li W."/>
            <person name="Li L."/>
            <person name="Jin H."/>
            <person name="Kang M."/>
            <person name="Dalai B."/>
            <person name="Li T."/>
            <person name="Liu L."/>
            <person name="Cheng Y."/>
            <person name="Zhang L."/>
            <person name="Xu T."/>
            <person name="Zheng H."/>
            <person name="Pu S."/>
            <person name="Wang B."/>
            <person name="Gu W."/>
            <person name="Zhang X.L."/>
            <person name="Zhu G.-F."/>
            <person name="Wang S."/>
            <person name="Zhao G.-P."/>
            <person name="Chen H."/>
        </authorList>
    </citation>
    <scope>NUCLEOTIDE SEQUENCE [LARGE SCALE GENOMIC DNA]</scope>
    <source>
        <strain>JL03</strain>
    </source>
</reference>
<proteinExistence type="inferred from homology"/>
<name>RL33_ACTPJ</name>
<keyword id="KW-0687">Ribonucleoprotein</keyword>
<keyword id="KW-0689">Ribosomal protein</keyword>
<sequence length="56" mass="6578">MAAKGNREKIRLVSSAETGHFYTTTKNKRNMPEKMEIKKFDPVVRKHVIYKEAKIK</sequence>
<accession>B0BTZ7</accession>
<evidence type="ECO:0000255" key="1">
    <source>
        <dbReference type="HAMAP-Rule" id="MF_00294"/>
    </source>
</evidence>
<evidence type="ECO:0000305" key="2"/>
<protein>
    <recommendedName>
        <fullName evidence="1">Large ribosomal subunit protein bL33</fullName>
    </recommendedName>
    <alternativeName>
        <fullName evidence="2">50S ribosomal protein L33</fullName>
    </alternativeName>
</protein>
<organism>
    <name type="scientific">Actinobacillus pleuropneumoniae serotype 3 (strain JL03)</name>
    <dbReference type="NCBI Taxonomy" id="434271"/>
    <lineage>
        <taxon>Bacteria</taxon>
        <taxon>Pseudomonadati</taxon>
        <taxon>Pseudomonadota</taxon>
        <taxon>Gammaproteobacteria</taxon>
        <taxon>Pasteurellales</taxon>
        <taxon>Pasteurellaceae</taxon>
        <taxon>Actinobacillus</taxon>
    </lineage>
</organism>